<evidence type="ECO:0000256" key="1">
    <source>
        <dbReference type="SAM" id="MobiDB-lite"/>
    </source>
</evidence>
<evidence type="ECO:0000269" key="2">
    <source>
    </source>
</evidence>
<evidence type="ECO:0000269" key="3">
    <source>
    </source>
</evidence>
<evidence type="ECO:0000269" key="4">
    <source>
    </source>
</evidence>
<evidence type="ECO:0000269" key="5">
    <source>
    </source>
</evidence>
<evidence type="ECO:0000269" key="6">
    <source>
    </source>
</evidence>
<evidence type="ECO:0000269" key="7">
    <source>
    </source>
</evidence>
<evidence type="ECO:0000269" key="8">
    <source>
    </source>
</evidence>
<evidence type="ECO:0000269" key="9">
    <source>
    </source>
</evidence>
<evidence type="ECO:0000269" key="10">
    <source>
    </source>
</evidence>
<evidence type="ECO:0000269" key="11">
    <source>
    </source>
</evidence>
<evidence type="ECO:0000269" key="12">
    <source>
    </source>
</evidence>
<evidence type="ECO:0000269" key="13">
    <source>
    </source>
</evidence>
<evidence type="ECO:0000303" key="14">
    <source>
    </source>
</evidence>
<evidence type="ECO:0000305" key="15"/>
<evidence type="ECO:0000312" key="16">
    <source>
        <dbReference type="HGNC" id="HGNC:15860"/>
    </source>
</evidence>
<evidence type="ECO:0007744" key="17">
    <source>
        <dbReference type="PDB" id="3JCR"/>
    </source>
</evidence>
<evidence type="ECO:0007744" key="18">
    <source>
        <dbReference type="PDB" id="5O9Z"/>
    </source>
</evidence>
<evidence type="ECO:0007744" key="19">
    <source>
    </source>
</evidence>
<evidence type="ECO:0007744" key="20">
    <source>
    </source>
</evidence>
<evidence type="ECO:0007744" key="21">
    <source>
    </source>
</evidence>
<evidence type="ECO:0007744" key="22">
    <source>
    </source>
</evidence>
<evidence type="ECO:0007829" key="23">
    <source>
        <dbReference type="PDB" id="8Q7N"/>
    </source>
</evidence>
<evidence type="ECO:0007829" key="24">
    <source>
        <dbReference type="PDB" id="8Q91"/>
    </source>
</evidence>
<evidence type="ECO:0007829" key="25">
    <source>
        <dbReference type="PDB" id="8QOZ"/>
    </source>
</evidence>
<evidence type="ECO:0007829" key="26">
    <source>
        <dbReference type="PDB" id="8QP8"/>
    </source>
</evidence>
<sequence length="941" mass="106925">MNKKKKPFLGMPAPLGYVPGLGRGATGFTTRSDIGPARDANDPVDDRHAPPGKRTVGDQMKKNQAADDDDEDLNDTNYDEFNGYAGSLFSSGPYEKDDEEADAIYAALDKRMDERRKERREQREKEEIEKYRMERPKIQQQFSDLKRKLAEVTEEEWLSIPEVGDARNKRQRNPRYEKLTPVPDSFFAKHLQTGENHTSVDPRQTQFGGLNTPYPGGLNTPYPGGMTPGLMTPGTGELDMRKIGQARNTLMDMRLSQVSDSVSGQTVVDPKGYLTDLNSMIPTHGGDINDIKKARLLLKSVRETNPHHPPAWIASARLEEVTGKLQVARNLIMKGTEMCPKSEDVWLEAARLQPGDTAKAVVAQAVRHLPQSVRIYIRAAELETDIRAKKRVLRKALEHVPNSVRLWKAAVELEEPEDARIMLSRAVECCPTSVELWLALARLETYENARKVLNKARENIPTDRHIWITAAKLEEANGNTQMVEKIIDRAITSLRANGVEINREQWIQDAEECDRAGSVATCQAVMRAVIGIGIEEEDRKHTWMEDADSCVAHNALECARAIYAYALQVFPSKKSVWLRAAYFEKNHGTRESLEALLQRAVAHCPKAEVLWLMGAKSKWLAGDVPAARSILALAFQANPNSEEIWLAAVKLESENDEYERARRLLAKARSSAPTARVFMKSVKLEWVQDNIRAAQDLCEEALRHYEDFPKLWMMKGQIEEQKEMMEKAREAYNQGLKKCPHSTPLWLLLSRLEEKIGQLTRARAILEKSRLKNPKNPGLWLESVRLEYRAGLKNIANTLMAKALQECPNSGILWSEAIFLEARPQRRTKSVDALKKCEHDPHVLLAVAKLFWSQRKITKAREWFHRTVKIDSDLGDAWAFFYKFELQHGTEEQQEEVRKRCESAEPRHGELWCAVSKDIANWQKKIGDILRLVAGRIKNTF</sequence>
<accession>O94906</accession>
<accession>B2RAR5</accession>
<accession>B3KMC6</accession>
<accession>O95109</accession>
<accession>Q5VXS5</accession>
<accession>Q9H3Z1</accession>
<accession>Q9H4T9</accession>
<accession>Q9H4U8</accession>
<accession>Q9NTE6</accession>
<comment type="function">
    <text evidence="6 8 9 12">Involved in pre-mRNA splicing as component of the U4/U6-U5 tri-snRNP complex, one of the building blocks of the spliceosome (PubMed:20118938, PubMed:21549338, PubMed:28781166). Enhances dihydrotestosterone-induced transactivation activity of AR, as well as dexamethasone-induced transactivation activity of NR3C1, but does not affect estrogen-induced transactivation.</text>
</comment>
<comment type="subunit">
    <text evidence="3 4 5 6 7 11 12 13">Identified in the spliceosome B complex (PubMed:28781166). Identified in the spliceosome C complex (PubMed:11991638). Associates with the U5 snRNP particle (PubMed:10788320). Component of the U4/U6-U5 tri-snRNP complex composed of the U4, U6 and U5 snRNAs and at least PRPF3, PRPF4, PRPF6, PRPF8, PRPF31, SNRNP200, TXNL4A, SNRNP40, DDX23, CD2BP2, PPIH, SNU13, EFTUD2, SART1 and USP39, LSm proteins LSm2-8 and Sm proteins (PubMed:16723661, PubMed:26912367, PubMed:28781166). Interacts with ARAF (PubMed:10848612). Interacts with AR and NR3C1, but not ESR1, independently of the presence of hormones (PubMed:12039962). Interacts with USH1G (PubMed:34023904).</text>
</comment>
<comment type="interaction">
    <interactant intactId="EBI-536755">
        <id>O94906</id>
    </interactant>
    <interactant intactId="EBI-365961">
        <id>P10398</id>
        <label>ARAF</label>
    </interactant>
    <organismsDiffer>false</organismsDiffer>
    <experiments>4</experiments>
</comment>
<comment type="interaction">
    <interactant intactId="EBI-536755">
        <id>O94906</id>
    </interactant>
    <interactant intactId="EBI-2341576">
        <id>P35226</id>
        <label>BMI1</label>
    </interactant>
    <organismsDiffer>false</organismsDiffer>
    <experiments>8</experiments>
</comment>
<comment type="interaction">
    <interactant intactId="EBI-536755">
        <id>O94906</id>
    </interactant>
    <interactant intactId="EBI-768015">
        <id>O95400</id>
        <label>CD2BP2</label>
    </interactant>
    <organismsDiffer>false</organismsDiffer>
    <experiments>9</experiments>
</comment>
<comment type="interaction">
    <interactant intactId="EBI-536755">
        <id>O94906</id>
    </interactant>
    <interactant intactId="EBI-357897">
        <id>Q15029</id>
        <label>EFTUD2</label>
    </interactant>
    <organismsDiffer>false</organismsDiffer>
    <experiments>6</experiments>
</comment>
<comment type="interaction">
    <interactant intactId="EBI-536755">
        <id>O94906</id>
    </interactant>
    <interactant intactId="EBI-713456">
        <id>Q13123</id>
        <label>IK</label>
    </interactant>
    <organismsDiffer>false</organismsDiffer>
    <experiments>2</experiments>
</comment>
<comment type="interaction">
    <interactant intactId="EBI-536755">
        <id>O94906</id>
    </interactant>
    <interactant intactId="EBI-744322">
        <id>O43395</id>
        <label>PRPF3</label>
    </interactant>
    <organismsDiffer>false</organismsDiffer>
    <experiments>5</experiments>
</comment>
<comment type="interaction">
    <interactant intactId="EBI-536755">
        <id>O94906</id>
    </interactant>
    <interactant intactId="EBI-1567797">
        <id>Q8WWY3</id>
        <label>PRPF31</label>
    </interactant>
    <organismsDiffer>false</organismsDiffer>
    <experiments>6</experiments>
</comment>
<comment type="interaction">
    <interactant intactId="EBI-536755">
        <id>O94906</id>
    </interactant>
    <interactant intactId="EBI-536755">
        <id>O94906</id>
        <label>PRPF6</label>
    </interactant>
    <organismsDiffer>false</organismsDiffer>
    <experiments>2</experiments>
</comment>
<comment type="interaction">
    <interactant intactId="EBI-536755">
        <id>O94906</id>
    </interactant>
    <interactant intactId="EBI-538479">
        <id>Q6P2Q9</id>
        <label>PRPF8</label>
    </interactant>
    <organismsDiffer>false</organismsDiffer>
    <experiments>5</experiments>
</comment>
<comment type="interaction">
    <interactant intactId="EBI-536755">
        <id>O94906</id>
    </interactant>
    <interactant intactId="EBI-607761">
        <id>O43290</id>
        <label>SART1</label>
    </interactant>
    <organismsDiffer>false</organismsDiffer>
    <experiments>6</experiments>
</comment>
<comment type="interaction">
    <interactant intactId="EBI-536755">
        <id>O94906</id>
    </interactant>
    <interactant intactId="EBI-2462271">
        <id>Q15428</id>
        <label>SF3A2</label>
    </interactant>
    <organismsDiffer>false</organismsDiffer>
    <experiments>2</experiments>
</comment>
<comment type="interaction">
    <interactant intactId="EBI-536755">
        <id>O94906</id>
    </interactant>
    <interactant intactId="EBI-1045395">
        <id>O75643</id>
        <label>SNRNP200</label>
    </interactant>
    <organismsDiffer>false</organismsDiffer>
    <experiments>5</experiments>
</comment>
<comment type="interaction">
    <interactant intactId="EBI-536755">
        <id>O94906</id>
    </interactant>
    <interactant intactId="EBI-746539">
        <id>P83876</id>
        <label>TXNL4A</label>
    </interactant>
    <organismsDiffer>false</organismsDiffer>
    <experiments>6</experiments>
</comment>
<comment type="interaction">
    <interactant intactId="EBI-536755">
        <id>O94906</id>
    </interactant>
    <interactant intactId="EBI-2819293">
        <id>Q69YN4</id>
        <label>VIRMA</label>
    </interactant>
    <organismsDiffer>false</organismsDiffer>
    <experiments>2</experiments>
</comment>
<comment type="subcellular location">
    <subcellularLocation>
        <location evidence="2 11 12 13">Nucleus</location>
        <location evidence="2 11 12 13">Nucleoplasm</location>
    </subcellularLocation>
    <subcellularLocation>
        <location evidence="9">Nucleus speckle</location>
    </subcellularLocation>
    <text evidence="9">Localized in splicing speckles.</text>
</comment>
<comment type="alternative products">
    <event type="alternative splicing"/>
    <isoform>
        <id>O94906-1</id>
        <name>1</name>
        <sequence type="displayed"/>
    </isoform>
    <isoform>
        <id>O94906-2</id>
        <name>2</name>
        <sequence type="described" ref="VSP_041857"/>
    </isoform>
</comment>
<comment type="tissue specificity">
    <text evidence="6">Widely expressed.</text>
</comment>
<comment type="PTM">
    <text evidence="8">Phosphorylated by PRP4K during spliceosome assembly.</text>
</comment>
<comment type="disease" evidence="9">
    <disease id="DI-03116">
        <name>Retinitis pigmentosa 60</name>
        <acronym>RP60</acronym>
        <description>A retinal dystrophy belonging to the group of pigmentary retinopathies. Retinitis pigmentosa is characterized by retinal pigment deposits visible on fundus examination and primary loss of rod photoreceptor cells followed by secondary loss of cone photoreceptors. Patients typically have night vision blindness and loss of midperipheral visual field. As their condition progresses, they lose their far peripheral visual field and eventually central vision as well.</description>
        <dbReference type="MIM" id="613983"/>
    </disease>
    <text>The disease may be caused by variants affecting the gene represented in this entry. Cells from RP60 patients show intron retention for pre-mRNA bearing specific splicing signals.</text>
</comment>
<reference key="1">
    <citation type="journal article" date="1999" name="Biochim. Biophys. Acta">
        <title>A novel mammalian nuclear protein similar to Schizosaccharomyces pombe Prp1p/Zer1p and Saccharomyces cerevisiae Prp6p pre-mRNA splicing factors.</title>
        <authorList>
            <person name="Nishikimi A."/>
            <person name="Mukai J."/>
            <person name="Kioka N."/>
            <person name="Yamada M."/>
        </authorList>
    </citation>
    <scope>NUCLEOTIDE SEQUENCE [MRNA] (ISOFORM 1)</scope>
    <scope>PROTEIN SEQUENCE OF 138-147; 300-309; 352-359; 776-784 AND 891-898</scope>
    <scope>SUBCELLULAR LOCATION</scope>
    <source>
        <tissue>Cervix carcinoma</tissue>
    </source>
</reference>
<reference key="2">
    <citation type="journal article" date="2000" name="J. Mol. Biol.">
        <title>The human homologue of the yeast splicing factor Prp6p contains multiple TPR elements and is stably associated with the U5 snRNP via protein-protein interactions.</title>
        <authorList>
            <person name="Makarov E.M."/>
            <person name="Makarova O.V."/>
            <person name="Achsel T."/>
            <person name="Luehrmann R."/>
        </authorList>
    </citation>
    <scope>NUCLEOTIDE SEQUENCE [MRNA] (ISOFORM 1)</scope>
    <scope>PROTEIN SEQUENCE OF 324-334; 395-408; 755-768; 871-883 AND 917-924</scope>
    <scope>INTERACTION WITH U5 AND U4/U6 SNRNPS</scope>
    <source>
        <tissue>Cervix carcinoma</tissue>
    </source>
</reference>
<reference key="3">
    <citation type="journal article" date="2000" name="Mol. Cell. Biol.">
        <title>Isoform-specific localization of A-RAF in mitochondria.</title>
        <authorList>
            <person name="Yuryev A."/>
            <person name="Ono M."/>
            <person name="Goff S.A."/>
            <person name="Macaluso F."/>
            <person name="Wennogle L.P."/>
        </authorList>
    </citation>
    <scope>NUCLEOTIDE SEQUENCE [MRNA] (ISOFORM 1)</scope>
    <scope>INTERACTION WITH ARAF</scope>
    <source>
        <tissue>Cervix carcinoma</tissue>
    </source>
</reference>
<reference key="4">
    <citation type="journal article" date="2004" name="Nat. Genet.">
        <title>Complete sequencing and characterization of 21,243 full-length human cDNAs.</title>
        <authorList>
            <person name="Ota T."/>
            <person name="Suzuki Y."/>
            <person name="Nishikawa T."/>
            <person name="Otsuki T."/>
            <person name="Sugiyama T."/>
            <person name="Irie R."/>
            <person name="Wakamatsu A."/>
            <person name="Hayashi K."/>
            <person name="Sato H."/>
            <person name="Nagai K."/>
            <person name="Kimura K."/>
            <person name="Makita H."/>
            <person name="Sekine M."/>
            <person name="Obayashi M."/>
            <person name="Nishi T."/>
            <person name="Shibahara T."/>
            <person name="Tanaka T."/>
            <person name="Ishii S."/>
            <person name="Yamamoto J."/>
            <person name="Saito K."/>
            <person name="Kawai Y."/>
            <person name="Isono Y."/>
            <person name="Nakamura Y."/>
            <person name="Nagahari K."/>
            <person name="Murakami K."/>
            <person name="Yasuda T."/>
            <person name="Iwayanagi T."/>
            <person name="Wagatsuma M."/>
            <person name="Shiratori A."/>
            <person name="Sudo H."/>
            <person name="Hosoiri T."/>
            <person name="Kaku Y."/>
            <person name="Kodaira H."/>
            <person name="Kondo H."/>
            <person name="Sugawara M."/>
            <person name="Takahashi M."/>
            <person name="Kanda K."/>
            <person name="Yokoi T."/>
            <person name="Furuya T."/>
            <person name="Kikkawa E."/>
            <person name="Omura Y."/>
            <person name="Abe K."/>
            <person name="Kamihara K."/>
            <person name="Katsuta N."/>
            <person name="Sato K."/>
            <person name="Tanikawa M."/>
            <person name="Yamazaki M."/>
            <person name="Ninomiya K."/>
            <person name="Ishibashi T."/>
            <person name="Yamashita H."/>
            <person name="Murakawa K."/>
            <person name="Fujimori K."/>
            <person name="Tanai H."/>
            <person name="Kimata M."/>
            <person name="Watanabe M."/>
            <person name="Hiraoka S."/>
            <person name="Chiba Y."/>
            <person name="Ishida S."/>
            <person name="Ono Y."/>
            <person name="Takiguchi S."/>
            <person name="Watanabe S."/>
            <person name="Yosida M."/>
            <person name="Hotuta T."/>
            <person name="Kusano J."/>
            <person name="Kanehori K."/>
            <person name="Takahashi-Fujii A."/>
            <person name="Hara H."/>
            <person name="Tanase T.-O."/>
            <person name="Nomura Y."/>
            <person name="Togiya S."/>
            <person name="Komai F."/>
            <person name="Hara R."/>
            <person name="Takeuchi K."/>
            <person name="Arita M."/>
            <person name="Imose N."/>
            <person name="Musashino K."/>
            <person name="Yuuki H."/>
            <person name="Oshima A."/>
            <person name="Sasaki N."/>
            <person name="Aotsuka S."/>
            <person name="Yoshikawa Y."/>
            <person name="Matsunawa H."/>
            <person name="Ichihara T."/>
            <person name="Shiohata N."/>
            <person name="Sano S."/>
            <person name="Moriya S."/>
            <person name="Momiyama H."/>
            <person name="Satoh N."/>
            <person name="Takami S."/>
            <person name="Terashima Y."/>
            <person name="Suzuki O."/>
            <person name="Nakagawa S."/>
            <person name="Senoh A."/>
            <person name="Mizoguchi H."/>
            <person name="Goto Y."/>
            <person name="Shimizu F."/>
            <person name="Wakebe H."/>
            <person name="Hishigaki H."/>
            <person name="Watanabe T."/>
            <person name="Sugiyama A."/>
            <person name="Takemoto M."/>
            <person name="Kawakami B."/>
            <person name="Yamazaki M."/>
            <person name="Watanabe K."/>
            <person name="Kumagai A."/>
            <person name="Itakura S."/>
            <person name="Fukuzumi Y."/>
            <person name="Fujimori Y."/>
            <person name="Komiyama M."/>
            <person name="Tashiro H."/>
            <person name="Tanigami A."/>
            <person name="Fujiwara T."/>
            <person name="Ono T."/>
            <person name="Yamada K."/>
            <person name="Fujii Y."/>
            <person name="Ozaki K."/>
            <person name="Hirao M."/>
            <person name="Ohmori Y."/>
            <person name="Kawabata A."/>
            <person name="Hikiji T."/>
            <person name="Kobatake N."/>
            <person name="Inagaki H."/>
            <person name="Ikema Y."/>
            <person name="Okamoto S."/>
            <person name="Okitani R."/>
            <person name="Kawakami T."/>
            <person name="Noguchi S."/>
            <person name="Itoh T."/>
            <person name="Shigeta K."/>
            <person name="Senba T."/>
            <person name="Matsumura K."/>
            <person name="Nakajima Y."/>
            <person name="Mizuno T."/>
            <person name="Morinaga M."/>
            <person name="Sasaki M."/>
            <person name="Togashi T."/>
            <person name="Oyama M."/>
            <person name="Hata H."/>
            <person name="Watanabe M."/>
            <person name="Komatsu T."/>
            <person name="Mizushima-Sugano J."/>
            <person name="Satoh T."/>
            <person name="Shirai Y."/>
            <person name="Takahashi Y."/>
            <person name="Nakagawa K."/>
            <person name="Okumura K."/>
            <person name="Nagase T."/>
            <person name="Nomura N."/>
            <person name="Kikuchi H."/>
            <person name="Masuho Y."/>
            <person name="Yamashita R."/>
            <person name="Nakai K."/>
            <person name="Yada T."/>
            <person name="Nakamura Y."/>
            <person name="Ohara O."/>
            <person name="Isogai T."/>
            <person name="Sugano S."/>
        </authorList>
    </citation>
    <scope>NUCLEOTIDE SEQUENCE [LARGE SCALE MRNA] (ISOFORMS 1 AND 2)</scope>
    <source>
        <tissue>Teratocarcinoma</tissue>
        <tissue>Testis</tissue>
    </source>
</reference>
<reference key="5">
    <citation type="journal article" date="2001" name="Nature">
        <title>The DNA sequence and comparative analysis of human chromosome 20.</title>
        <authorList>
            <person name="Deloukas P."/>
            <person name="Matthews L.H."/>
            <person name="Ashurst J.L."/>
            <person name="Burton J."/>
            <person name="Gilbert J.G.R."/>
            <person name="Jones M."/>
            <person name="Stavrides G."/>
            <person name="Almeida J.P."/>
            <person name="Babbage A.K."/>
            <person name="Bagguley C.L."/>
            <person name="Bailey J."/>
            <person name="Barlow K.F."/>
            <person name="Bates K.N."/>
            <person name="Beard L.M."/>
            <person name="Beare D.M."/>
            <person name="Beasley O.P."/>
            <person name="Bird C.P."/>
            <person name="Blakey S.E."/>
            <person name="Bridgeman A.M."/>
            <person name="Brown A.J."/>
            <person name="Buck D."/>
            <person name="Burrill W.D."/>
            <person name="Butler A.P."/>
            <person name="Carder C."/>
            <person name="Carter N.P."/>
            <person name="Chapman J.C."/>
            <person name="Clamp M."/>
            <person name="Clark G."/>
            <person name="Clark L.N."/>
            <person name="Clark S.Y."/>
            <person name="Clee C.M."/>
            <person name="Clegg S."/>
            <person name="Cobley V.E."/>
            <person name="Collier R.E."/>
            <person name="Connor R.E."/>
            <person name="Corby N.R."/>
            <person name="Coulson A."/>
            <person name="Coville G.J."/>
            <person name="Deadman R."/>
            <person name="Dhami P.D."/>
            <person name="Dunn M."/>
            <person name="Ellington A.G."/>
            <person name="Frankland J.A."/>
            <person name="Fraser A."/>
            <person name="French L."/>
            <person name="Garner P."/>
            <person name="Grafham D.V."/>
            <person name="Griffiths C."/>
            <person name="Griffiths M.N.D."/>
            <person name="Gwilliam R."/>
            <person name="Hall R.E."/>
            <person name="Hammond S."/>
            <person name="Harley J.L."/>
            <person name="Heath P.D."/>
            <person name="Ho S."/>
            <person name="Holden J.L."/>
            <person name="Howden P.J."/>
            <person name="Huckle E."/>
            <person name="Hunt A.R."/>
            <person name="Hunt S.E."/>
            <person name="Jekosch K."/>
            <person name="Johnson C.M."/>
            <person name="Johnson D."/>
            <person name="Kay M.P."/>
            <person name="Kimberley A.M."/>
            <person name="King A."/>
            <person name="Knights A."/>
            <person name="Laird G.K."/>
            <person name="Lawlor S."/>
            <person name="Lehvaeslaiho M.H."/>
            <person name="Leversha M.A."/>
            <person name="Lloyd C."/>
            <person name="Lloyd D.M."/>
            <person name="Lovell J.D."/>
            <person name="Marsh V.L."/>
            <person name="Martin S.L."/>
            <person name="McConnachie L.J."/>
            <person name="McLay K."/>
            <person name="McMurray A.A."/>
            <person name="Milne S.A."/>
            <person name="Mistry D."/>
            <person name="Moore M.J.F."/>
            <person name="Mullikin J.C."/>
            <person name="Nickerson T."/>
            <person name="Oliver K."/>
            <person name="Parker A."/>
            <person name="Patel R."/>
            <person name="Pearce T.A.V."/>
            <person name="Peck A.I."/>
            <person name="Phillimore B.J.C.T."/>
            <person name="Prathalingam S.R."/>
            <person name="Plumb R.W."/>
            <person name="Ramsay H."/>
            <person name="Rice C.M."/>
            <person name="Ross M.T."/>
            <person name="Scott C.E."/>
            <person name="Sehra H.K."/>
            <person name="Shownkeen R."/>
            <person name="Sims S."/>
            <person name="Skuce C.D."/>
            <person name="Smith M.L."/>
            <person name="Soderlund C."/>
            <person name="Steward C.A."/>
            <person name="Sulston J.E."/>
            <person name="Swann R.M."/>
            <person name="Sycamore N."/>
            <person name="Taylor R."/>
            <person name="Tee L."/>
            <person name="Thomas D.W."/>
            <person name="Thorpe A."/>
            <person name="Tracey A."/>
            <person name="Tromans A.C."/>
            <person name="Vaudin M."/>
            <person name="Wall M."/>
            <person name="Wallis J.M."/>
            <person name="Whitehead S.L."/>
            <person name="Whittaker P."/>
            <person name="Willey D.L."/>
            <person name="Williams L."/>
            <person name="Williams S.A."/>
            <person name="Wilming L."/>
            <person name="Wray P.W."/>
            <person name="Hubbard T."/>
            <person name="Durbin R.M."/>
            <person name="Bentley D.R."/>
            <person name="Beck S."/>
            <person name="Rogers J."/>
        </authorList>
    </citation>
    <scope>NUCLEOTIDE SEQUENCE [LARGE SCALE GENOMIC DNA]</scope>
</reference>
<reference key="6">
    <citation type="journal article" date="2004" name="Genome Res.">
        <title>The status, quality, and expansion of the NIH full-length cDNA project: the Mammalian Gene Collection (MGC).</title>
        <authorList>
            <consortium name="The MGC Project Team"/>
        </authorList>
    </citation>
    <scope>NUCLEOTIDE SEQUENCE [LARGE SCALE MRNA] (ISOFORM 1)</scope>
    <source>
        <tissue>Colon</tissue>
    </source>
</reference>
<reference key="7">
    <citation type="journal article" date="2007" name="BMC Genomics">
        <title>The full-ORF clone resource of the German cDNA consortium.</title>
        <authorList>
            <person name="Bechtel S."/>
            <person name="Rosenfelder H."/>
            <person name="Duda A."/>
            <person name="Schmidt C.P."/>
            <person name="Ernst U."/>
            <person name="Wellenreuther R."/>
            <person name="Mehrle A."/>
            <person name="Schuster C."/>
            <person name="Bahr A."/>
            <person name="Bloecker H."/>
            <person name="Heubner D."/>
            <person name="Hoerlein A."/>
            <person name="Michel G."/>
            <person name="Wedler H."/>
            <person name="Koehrer K."/>
            <person name="Ottenwaelder B."/>
            <person name="Poustka A."/>
            <person name="Wiemann S."/>
            <person name="Schupp I."/>
        </authorList>
    </citation>
    <scope>NUCLEOTIDE SEQUENCE [LARGE SCALE MRNA] OF 402-941</scope>
    <source>
        <tissue>Testis</tissue>
    </source>
</reference>
<reference key="8">
    <citation type="journal article" date="2002" name="J. Biol. Chem.">
        <title>Activation function-1 domain of androgen receptor contributes to the interaction between subnuclear splicing factor compartment and nuclear receptor compartment. Identification of the p102 U5 small nuclear ribonucleoprotein particle-binding protein as a coactivator for the receptor.</title>
        <authorList>
            <person name="Zhao Y."/>
            <person name="Goto K."/>
            <person name="Saitoh M."/>
            <person name="Yanase T."/>
            <person name="Nomura M."/>
            <person name="Okabe T."/>
            <person name="Takayanagi R."/>
            <person name="Nawata H."/>
        </authorList>
    </citation>
    <scope>FUNCTION</scope>
    <scope>INTERACTION WITH AR AND NR3C1</scope>
    <scope>SUBCELLULAR LOCATION</scope>
    <scope>TISSUE SPECIFICITY</scope>
</reference>
<reference key="9">
    <citation type="journal article" date="2002" name="RNA">
        <title>Purification and characterization of native spliceosomes suitable for three-dimensional structural analysis.</title>
        <authorList>
            <person name="Jurica M.S."/>
            <person name="Licklider L.J."/>
            <person name="Gygi S.P."/>
            <person name="Grigorieff N."/>
            <person name="Moore M.J."/>
        </authorList>
    </citation>
    <scope>IDENTIFICATION BY MASS SPECTROMETRY</scope>
    <scope>IDENTIFICATION IN THE SPLICEOSOMAL C COMPLEX</scope>
</reference>
<reference key="10">
    <citation type="journal article" date="2006" name="RNA">
        <title>The network of protein-protein interactions within the human U4/U6.U5 tri-snRNP.</title>
        <authorList>
            <person name="Liu S."/>
            <person name="Rauhut R."/>
            <person name="Vornlocher H.-P."/>
            <person name="Luehrmann R."/>
        </authorList>
    </citation>
    <scope>SUBUNIT</scope>
</reference>
<reference key="11">
    <citation type="journal article" date="2008" name="Proc. Natl. Acad. Sci. U.S.A.">
        <title>A quantitative atlas of mitotic phosphorylation.</title>
        <authorList>
            <person name="Dephoure N."/>
            <person name="Zhou C."/>
            <person name="Villen J."/>
            <person name="Beausoleil S.A."/>
            <person name="Bakalarski C.E."/>
            <person name="Elledge S.J."/>
            <person name="Gygi S.P."/>
        </authorList>
    </citation>
    <scope>PHOSPHORYLATION [LARGE SCALE ANALYSIS] AT THR-266; THR-275 AND SER-279</scope>
    <scope>IDENTIFICATION BY MASS SPECTROMETRY [LARGE SCALE ANALYSIS]</scope>
    <source>
        <tissue>Cervix carcinoma</tissue>
    </source>
</reference>
<reference key="12">
    <citation type="journal article" date="2009" name="Sci. Signal.">
        <title>Quantitative phosphoproteomic analysis of T cell receptor signaling reveals system-wide modulation of protein-protein interactions.</title>
        <authorList>
            <person name="Mayya V."/>
            <person name="Lundgren D.H."/>
            <person name="Hwang S.-I."/>
            <person name="Rezaul K."/>
            <person name="Wu L."/>
            <person name="Eng J.K."/>
            <person name="Rodionov V."/>
            <person name="Han D.K."/>
        </authorList>
    </citation>
    <scope>IDENTIFICATION BY MASS SPECTROMETRY [LARGE SCALE ANALYSIS]</scope>
    <source>
        <tissue>Leukemic T-cell</tissue>
    </source>
</reference>
<reference key="13">
    <citation type="journal article" date="2010" name="Nat. Struct. Mol. Biol.">
        <title>Human PRP4 kinase is required for stable tri-snRNP association during spliceosomal B complex formation.</title>
        <authorList>
            <person name="Schneider M."/>
            <person name="Hsiao H.H."/>
            <person name="Will C.L."/>
            <person name="Giet R."/>
            <person name="Urlaub H."/>
            <person name="Luehrmann R."/>
        </authorList>
    </citation>
    <scope>FUNCTION</scope>
    <scope>PHOSPHORYLATION BY PRP4K</scope>
</reference>
<reference key="14">
    <citation type="journal article" date="2010" name="Sci. Signal.">
        <title>Quantitative phosphoproteomics reveals widespread full phosphorylation site occupancy during mitosis.</title>
        <authorList>
            <person name="Olsen J.V."/>
            <person name="Vermeulen M."/>
            <person name="Santamaria A."/>
            <person name="Kumar C."/>
            <person name="Miller M.L."/>
            <person name="Jensen L.J."/>
            <person name="Gnad F."/>
            <person name="Cox J."/>
            <person name="Jensen T.S."/>
            <person name="Nigg E.A."/>
            <person name="Brunak S."/>
            <person name="Mann M."/>
        </authorList>
    </citation>
    <scope>PHOSPHORYLATION [LARGE SCALE ANALYSIS] AT THR-266; THR-275 AND SER-279</scope>
    <scope>IDENTIFICATION BY MASS SPECTROMETRY [LARGE SCALE ANALYSIS]</scope>
    <source>
        <tissue>Cervix carcinoma</tissue>
    </source>
</reference>
<reference key="15">
    <citation type="journal article" date="2011" name="BMC Syst. Biol.">
        <title>Initial characterization of the human central proteome.</title>
        <authorList>
            <person name="Burkard T.R."/>
            <person name="Planyavsky M."/>
            <person name="Kaupe I."/>
            <person name="Breitwieser F.P."/>
            <person name="Buerckstuemmer T."/>
            <person name="Bennett K.L."/>
            <person name="Superti-Furga G."/>
            <person name="Colinge J."/>
        </authorList>
    </citation>
    <scope>IDENTIFICATION BY MASS SPECTROMETRY [LARGE SCALE ANALYSIS]</scope>
</reference>
<reference key="16">
    <citation type="journal article" date="2013" name="J. Proteome Res.">
        <title>Toward a comprehensive characterization of a human cancer cell phosphoproteome.</title>
        <authorList>
            <person name="Zhou H."/>
            <person name="Di Palma S."/>
            <person name="Preisinger C."/>
            <person name="Peng M."/>
            <person name="Polat A.N."/>
            <person name="Heck A.J."/>
            <person name="Mohammed S."/>
        </authorList>
    </citation>
    <scope>PHOSPHORYLATION [LARGE SCALE ANALYSIS] AT THR-180 AND THR-266</scope>
    <scope>IDENTIFICATION BY MASS SPECTROMETRY [LARGE SCALE ANALYSIS]</scope>
    <source>
        <tissue>Cervix carcinoma</tissue>
        <tissue>Erythroleukemia</tissue>
    </source>
</reference>
<reference key="17">
    <citation type="journal article" date="2014" name="J. Proteomics">
        <title>An enzyme assisted RP-RPLC approach for in-depth analysis of human liver phosphoproteome.</title>
        <authorList>
            <person name="Bian Y."/>
            <person name="Song C."/>
            <person name="Cheng K."/>
            <person name="Dong M."/>
            <person name="Wang F."/>
            <person name="Huang J."/>
            <person name="Sun D."/>
            <person name="Wang L."/>
            <person name="Ye M."/>
            <person name="Zou H."/>
        </authorList>
    </citation>
    <scope>PHOSPHORYLATION [LARGE SCALE ANALYSIS] AT SER-143 AND THR-266</scope>
    <scope>IDENTIFICATION BY MASS SPECTROMETRY [LARGE SCALE ANALYSIS]</scope>
    <source>
        <tissue>Liver</tissue>
    </source>
</reference>
<reference key="18">
    <citation type="journal article" date="2021" name="Nucleic Acids Res.">
        <title>SANS (USH1G) regulates pre-mRNA splicing by mediating the intra-nuclear transfer of tri-snRNP complexes.</title>
        <authorList>
            <person name="Yildirim A."/>
            <person name="Mozaffari-Jovin S."/>
            <person name="Wallisch A.K."/>
            <person name="Schaefer J."/>
            <person name="Ludwig S.E.J."/>
            <person name="Urlaub H."/>
            <person name="Luehrmann R."/>
            <person name="Wolfrum U."/>
        </authorList>
    </citation>
    <scope>INTERACTION WITH USH1G</scope>
    <scope>SUBCELLULAR LOCATION</scope>
</reference>
<reference evidence="17" key="19">
    <citation type="journal article" date="2016" name="Science">
        <title>Molecular architecture of the human U4/U6.U5 tri-snRNP.</title>
        <authorList>
            <person name="Agafonov D.E."/>
            <person name="Kastner B."/>
            <person name="Dybkov O."/>
            <person name="Hofele R.V."/>
            <person name="Liu W.T."/>
            <person name="Urlaub H."/>
            <person name="Luhrmann R."/>
            <person name="Stark H."/>
        </authorList>
    </citation>
    <scope>STRUCTURE BY ELECTRON MICROSCOPY (7.00 ANGSTROMS)</scope>
    <scope>SUBUNIT</scope>
    <scope>SUBCELLULAR LOCATION</scope>
    <scope>IDENTIFICATION BY MASS SPECTROMETRY</scope>
</reference>
<reference evidence="18" key="20">
    <citation type="journal article" date="2017" name="Cell">
        <title>Cryo-EM Structure of a Pre-catalytic Human Spliceosome Primed for Activation.</title>
        <authorList>
            <person name="Bertram K."/>
            <person name="Agafonov D.E."/>
            <person name="Dybkov O."/>
            <person name="Haselbach D."/>
            <person name="Leelaram M.N."/>
            <person name="Will C.L."/>
            <person name="Urlaub H."/>
            <person name="Kastner B."/>
            <person name="Luhrmann R."/>
            <person name="Stark H."/>
        </authorList>
    </citation>
    <scope>STRUCTURE BY ELECTRON MICROSCOPY (4.50 ANGSTROMS)</scope>
    <scope>FUNCTION</scope>
    <scope>SUBUNIT</scope>
    <scope>SUBCELLULAR LOCATION</scope>
    <scope>IDENTIFICATION BY MASS SPECTROMETRY</scope>
</reference>
<reference key="21">
    <citation type="journal article" date="2011" name="Am. J. Hum. Genet.">
        <title>A missense mutation in PRPF6 causes impairment of pre-mRNA splicing and autosomal-dominant retinitis pigmentosa.</title>
        <authorList>
            <person name="Tanackovic G."/>
            <person name="Ransijn A."/>
            <person name="Ayuso C."/>
            <person name="Harper S."/>
            <person name="Berson E.L."/>
            <person name="Rivolta C."/>
        </authorList>
    </citation>
    <scope>VARIANT RP60 TRP-729</scope>
    <scope>CHARACTERIZATION OF VARIANT RP60 TRP-729</scope>
    <scope>FUNCTION</scope>
    <scope>SUBCELLULAR LOCATION</scope>
</reference>
<reference key="22">
    <citation type="journal article" date="2012" name="PLoS ONE">
        <title>Mutations in the gene DNAJC5 cause autosomal dominant Kufs disease in a proportion of cases: study of the Parry family and 8 other families.</title>
        <authorList>
            <person name="Velinov M."/>
            <person name="Dolzhanskaya N."/>
            <person name="Gonzalez M."/>
            <person name="Powell E."/>
            <person name="Konidari I."/>
            <person name="Hulme W."/>
            <person name="Staropoli J.F."/>
            <person name="Xin W."/>
            <person name="Wen G.Y."/>
            <person name="Barone R."/>
            <person name="Coppel S.H."/>
            <person name="Sims K."/>
            <person name="Brown W.T."/>
            <person name="Zuchner S."/>
        </authorList>
    </citation>
    <scope>VARIANT SER-477</scope>
</reference>
<organism>
    <name type="scientific">Homo sapiens</name>
    <name type="common">Human</name>
    <dbReference type="NCBI Taxonomy" id="9606"/>
    <lineage>
        <taxon>Eukaryota</taxon>
        <taxon>Metazoa</taxon>
        <taxon>Chordata</taxon>
        <taxon>Craniata</taxon>
        <taxon>Vertebrata</taxon>
        <taxon>Euteleostomi</taxon>
        <taxon>Mammalia</taxon>
        <taxon>Eutheria</taxon>
        <taxon>Euarchontoglires</taxon>
        <taxon>Primates</taxon>
        <taxon>Haplorrhini</taxon>
        <taxon>Catarrhini</taxon>
        <taxon>Hominidae</taxon>
        <taxon>Homo</taxon>
    </lineage>
</organism>
<proteinExistence type="evidence at protein level"/>
<keyword id="KW-0002">3D-structure</keyword>
<keyword id="KW-0025">Alternative splicing</keyword>
<keyword id="KW-0903">Direct protein sequencing</keyword>
<keyword id="KW-0225">Disease variant</keyword>
<keyword id="KW-0507">mRNA processing</keyword>
<keyword id="KW-0508">mRNA splicing</keyword>
<keyword id="KW-0539">Nucleus</keyword>
<keyword id="KW-0597">Phosphoprotein</keyword>
<keyword id="KW-1267">Proteomics identification</keyword>
<keyword id="KW-1185">Reference proteome</keyword>
<keyword id="KW-0677">Repeat</keyword>
<keyword id="KW-0682">Retinitis pigmentosa</keyword>
<keyword id="KW-0747">Spliceosome</keyword>
<feature type="chain" id="PRO_0000205759" description="Pre-mRNA-processing factor 6">
    <location>
        <begin position="1"/>
        <end position="941"/>
    </location>
</feature>
<feature type="repeat" description="HAT 1">
    <location>
        <begin position="384"/>
        <end position="416"/>
    </location>
</feature>
<feature type="repeat" description="HAT 2">
    <location>
        <begin position="418"/>
        <end position="444"/>
    </location>
</feature>
<feature type="repeat" description="HAT 3">
    <location>
        <begin position="445"/>
        <end position="476"/>
    </location>
</feature>
<feature type="repeat" description="HAT 4">
    <location>
        <begin position="554"/>
        <end position="586"/>
    </location>
</feature>
<feature type="repeat" description="HAT 5">
    <location>
        <begin position="588"/>
        <end position="620"/>
    </location>
</feature>
<feature type="repeat" description="HAT 6">
    <location>
        <begin position="622"/>
        <end position="654"/>
    </location>
</feature>
<feature type="repeat" description="HAT 7">
    <location>
        <begin position="689"/>
        <end position="721"/>
    </location>
</feature>
<feature type="repeat" description="HAT 8">
    <location>
        <begin position="723"/>
        <end position="755"/>
    </location>
</feature>
<feature type="repeat" description="HAT 9">
    <location>
        <begin position="855"/>
        <end position="887"/>
    </location>
</feature>
<feature type="region of interest" description="Disordered" evidence="1">
    <location>
        <begin position="1"/>
        <end position="79"/>
    </location>
</feature>
<feature type="compositionally biased region" description="Basic and acidic residues" evidence="1">
    <location>
        <begin position="39"/>
        <end position="65"/>
    </location>
</feature>
<feature type="compositionally biased region" description="Acidic residues" evidence="1">
    <location>
        <begin position="66"/>
        <end position="78"/>
    </location>
</feature>
<feature type="modified residue" description="Phosphoserine" evidence="22">
    <location>
        <position position="143"/>
    </location>
</feature>
<feature type="modified residue" description="Phosphothreonine" evidence="21">
    <location>
        <position position="180"/>
    </location>
</feature>
<feature type="modified residue" description="Phosphothreonine" evidence="19 20 21 22">
    <location>
        <position position="266"/>
    </location>
</feature>
<feature type="modified residue" description="Phosphothreonine" evidence="19 20">
    <location>
        <position position="275"/>
    </location>
</feature>
<feature type="modified residue" description="Phosphoserine" evidence="19 20">
    <location>
        <position position="279"/>
    </location>
</feature>
<feature type="splice variant" id="VSP_041857" description="In isoform 2." evidence="14">
    <location>
        <begin position="637"/>
        <end position="676"/>
    </location>
</feature>
<feature type="sequence variant" id="VAR_069766" description="Found in a family with neuronal ceroid lipofuscinosis carrying a causative mutation in DNAJC5; uncertain significance; might act as modifier of disease phenotype; dbSNP:rs1433048453." evidence="10">
    <original>N</original>
    <variation>S</variation>
    <location>
        <position position="477"/>
    </location>
</feature>
<feature type="sequence variant" id="VAR_065768" description="In RP60; impaired function in pre-mRNA splicing; mislocalized in Cajal bodies; partial loss of localization in splicing speckles; dbSNP:rs387907100." evidence="9">
    <original>R</original>
    <variation>W</variation>
    <location>
        <position position="729"/>
    </location>
</feature>
<feature type="sequence conflict" description="In Ref. 3; AAD01798." evidence="15" ref="3">
    <original>G</original>
    <variation>W</variation>
    <location>
        <position position="20"/>
    </location>
</feature>
<feature type="sequence conflict" description="In Ref. 3; AAD01798." evidence="15" ref="3">
    <original>P</original>
    <variation>R</variation>
    <location>
        <position position="223"/>
    </location>
</feature>
<feature type="sequence conflict" description="In Ref. 4; BAG50938." evidence="15" ref="4">
    <original>H</original>
    <variation>R</variation>
    <location>
        <position position="284"/>
    </location>
</feature>
<feature type="sequence conflict" description="In Ref. 4; BAG36962." evidence="15" ref="4">
    <original>I</original>
    <variation>T</variation>
    <location>
        <position position="421"/>
    </location>
</feature>
<feature type="turn" evidence="23">
    <location>
        <begin position="19"/>
        <end position="21"/>
    </location>
</feature>
<feature type="strand" evidence="23">
    <location>
        <begin position="32"/>
        <end position="35"/>
    </location>
</feature>
<feature type="helix" evidence="26">
    <location>
        <begin position="75"/>
        <end position="77"/>
    </location>
</feature>
<feature type="turn" evidence="26">
    <location>
        <begin position="80"/>
        <end position="82"/>
    </location>
</feature>
<feature type="strand" evidence="26">
    <location>
        <begin position="83"/>
        <end position="86"/>
    </location>
</feature>
<feature type="strand" evidence="26">
    <location>
        <begin position="90"/>
        <end position="92"/>
    </location>
</feature>
<feature type="helix" evidence="24">
    <location>
        <begin position="96"/>
        <end position="113"/>
    </location>
</feature>
<feature type="turn" evidence="25">
    <location>
        <begin position="114"/>
        <end position="116"/>
    </location>
</feature>
<feature type="helix" evidence="24">
    <location>
        <begin position="117"/>
        <end position="126"/>
    </location>
</feature>
<feature type="helix" evidence="23">
    <location>
        <begin position="138"/>
        <end position="140"/>
    </location>
</feature>
<feature type="helix" evidence="23">
    <location>
        <begin position="143"/>
        <end position="148"/>
    </location>
</feature>
<feature type="helix" evidence="23">
    <location>
        <begin position="149"/>
        <end position="151"/>
    </location>
</feature>
<feature type="helix" evidence="23">
    <location>
        <begin position="156"/>
        <end position="159"/>
    </location>
</feature>
<feature type="helix" evidence="23">
    <location>
        <begin position="169"/>
        <end position="172"/>
    </location>
</feature>
<feature type="helix" evidence="23">
    <location>
        <begin position="184"/>
        <end position="192"/>
    </location>
</feature>
<feature type="helix" evidence="26">
    <location>
        <begin position="241"/>
        <end position="259"/>
    </location>
</feature>
<feature type="helix" evidence="26">
    <location>
        <begin position="270"/>
        <end position="280"/>
    </location>
</feature>
<feature type="strand" evidence="23">
    <location>
        <begin position="288"/>
        <end position="290"/>
    </location>
</feature>
<feature type="helix" evidence="23">
    <location>
        <begin position="291"/>
        <end position="304"/>
    </location>
</feature>
<feature type="helix" evidence="23">
    <location>
        <begin position="309"/>
        <end position="321"/>
    </location>
</feature>
<feature type="helix" evidence="23">
    <location>
        <begin position="325"/>
        <end position="338"/>
    </location>
</feature>
<feature type="helix" evidence="23">
    <location>
        <begin position="344"/>
        <end position="352"/>
    </location>
</feature>
<feature type="helix" evidence="23">
    <location>
        <begin position="355"/>
        <end position="368"/>
    </location>
</feature>
<feature type="helix" evidence="23">
    <location>
        <begin position="375"/>
        <end position="382"/>
    </location>
</feature>
<feature type="helix" evidence="23">
    <location>
        <begin position="386"/>
        <end position="397"/>
    </location>
</feature>
<feature type="helix" evidence="23">
    <location>
        <begin position="404"/>
        <end position="411"/>
    </location>
</feature>
<feature type="strand" evidence="23">
    <location>
        <begin position="412"/>
        <end position="414"/>
    </location>
</feature>
<feature type="helix" evidence="23">
    <location>
        <begin position="416"/>
        <end position="427"/>
    </location>
</feature>
<feature type="helix" evidence="23">
    <location>
        <begin position="434"/>
        <end position="441"/>
    </location>
</feature>
<feature type="helix" evidence="23">
    <location>
        <begin position="446"/>
        <end position="458"/>
    </location>
</feature>
<feature type="strand" evidence="23">
    <location>
        <begin position="463"/>
        <end position="465"/>
    </location>
</feature>
<feature type="helix" evidence="23">
    <location>
        <begin position="466"/>
        <end position="476"/>
    </location>
</feature>
<feature type="helix" evidence="23">
    <location>
        <begin position="480"/>
        <end position="496"/>
    </location>
</feature>
<feature type="helix" evidence="23">
    <location>
        <begin position="503"/>
        <end position="515"/>
    </location>
</feature>
<feature type="helix" evidence="23">
    <location>
        <begin position="519"/>
        <end position="531"/>
    </location>
</feature>
<feature type="helix" evidence="23">
    <location>
        <begin position="541"/>
        <end position="551"/>
    </location>
</feature>
<feature type="helix" evidence="23">
    <location>
        <begin position="557"/>
        <end position="567"/>
    </location>
</feature>
<feature type="helix" evidence="23">
    <location>
        <begin position="575"/>
        <end position="586"/>
    </location>
</feature>
<feature type="helix" evidence="23">
    <location>
        <begin position="591"/>
        <end position="601"/>
    </location>
</feature>
<feature type="strand" evidence="23">
    <location>
        <begin position="606"/>
        <end position="610"/>
    </location>
</feature>
<feature type="helix" evidence="23">
    <location>
        <begin position="611"/>
        <end position="619"/>
    </location>
</feature>
<feature type="helix" evidence="23">
    <location>
        <begin position="624"/>
        <end position="636"/>
    </location>
</feature>
<feature type="strand" evidence="23">
    <location>
        <begin position="639"/>
        <end position="641"/>
    </location>
</feature>
<feature type="helix" evidence="23">
    <location>
        <begin position="643"/>
        <end position="653"/>
    </location>
</feature>
<feature type="strand" evidence="23">
    <location>
        <begin position="654"/>
        <end position="656"/>
    </location>
</feature>
<feature type="helix" evidence="23">
    <location>
        <begin position="658"/>
        <end position="669"/>
    </location>
</feature>
<feature type="helix" evidence="23">
    <location>
        <begin position="675"/>
        <end position="685"/>
    </location>
</feature>
<feature type="helix" evidence="23">
    <location>
        <begin position="691"/>
        <end position="704"/>
    </location>
</feature>
<feature type="helix" evidence="23">
    <location>
        <begin position="709"/>
        <end position="721"/>
    </location>
</feature>
<feature type="helix" evidence="23">
    <location>
        <begin position="725"/>
        <end position="738"/>
    </location>
</feature>
<feature type="strand" evidence="23">
    <location>
        <begin position="742"/>
        <end position="745"/>
    </location>
</feature>
<feature type="helix" evidence="23">
    <location>
        <begin position="746"/>
        <end position="755"/>
    </location>
</feature>
<feature type="helix" evidence="23">
    <location>
        <begin position="759"/>
        <end position="772"/>
    </location>
</feature>
<feature type="helix" evidence="23">
    <location>
        <begin position="779"/>
        <end position="785"/>
    </location>
</feature>
<feature type="turn" evidence="23">
    <location>
        <begin position="786"/>
        <end position="790"/>
    </location>
</feature>
<feature type="helix" evidence="23">
    <location>
        <begin position="794"/>
        <end position="805"/>
    </location>
</feature>
<feature type="helix" evidence="23">
    <location>
        <begin position="811"/>
        <end position="819"/>
    </location>
</feature>
<feature type="strand" evidence="23">
    <location>
        <begin position="823"/>
        <end position="827"/>
    </location>
</feature>
<feature type="helix" evidence="23">
    <location>
        <begin position="828"/>
        <end position="836"/>
    </location>
</feature>
<feature type="strand" evidence="23">
    <location>
        <begin position="841"/>
        <end position="843"/>
    </location>
</feature>
<feature type="helix" evidence="23">
    <location>
        <begin position="844"/>
        <end position="853"/>
    </location>
</feature>
<feature type="helix" evidence="23">
    <location>
        <begin position="857"/>
        <end position="869"/>
    </location>
</feature>
<feature type="strand" evidence="25">
    <location>
        <begin position="872"/>
        <end position="874"/>
    </location>
</feature>
<feature type="helix" evidence="23">
    <location>
        <begin position="876"/>
        <end position="887"/>
    </location>
</feature>
<feature type="helix" evidence="23">
    <location>
        <begin position="893"/>
        <end position="902"/>
    </location>
</feature>
<feature type="turn" evidence="25">
    <location>
        <begin position="905"/>
        <end position="907"/>
    </location>
</feature>
<feature type="helix" evidence="23">
    <location>
        <begin position="909"/>
        <end position="918"/>
    </location>
</feature>
<feature type="strand" evidence="23">
    <location>
        <begin position="922"/>
        <end position="925"/>
    </location>
</feature>
<feature type="helix" evidence="23">
    <location>
        <begin position="926"/>
        <end position="928"/>
    </location>
</feature>
<feature type="helix" evidence="23">
    <location>
        <begin position="935"/>
        <end position="939"/>
    </location>
</feature>
<gene>
    <name evidence="16" type="primary">PRPF6</name>
    <name type="synonym">C20orf14</name>
</gene>
<dbReference type="EMBL" id="AB019219">
    <property type="protein sequence ID" value="BAA37140.1"/>
    <property type="molecule type" value="mRNA"/>
</dbReference>
<dbReference type="EMBL" id="AF221842">
    <property type="protein sequence ID" value="AAF66128.1"/>
    <property type="molecule type" value="mRNA"/>
</dbReference>
<dbReference type="EMBL" id="AF026031">
    <property type="protein sequence ID" value="AAD01798.1"/>
    <property type="molecule type" value="mRNA"/>
</dbReference>
<dbReference type="EMBL" id="AK001554">
    <property type="protein sequence ID" value="BAG50938.1"/>
    <property type="molecule type" value="mRNA"/>
</dbReference>
<dbReference type="EMBL" id="AK314310">
    <property type="protein sequence ID" value="BAG36962.1"/>
    <property type="molecule type" value="mRNA"/>
</dbReference>
<dbReference type="EMBL" id="AL118506">
    <property type="status" value="NOT_ANNOTATED_CDS"/>
    <property type="molecule type" value="Genomic_DNA"/>
</dbReference>
<dbReference type="EMBL" id="AL355803">
    <property type="status" value="NOT_ANNOTATED_CDS"/>
    <property type="molecule type" value="Genomic_DNA"/>
</dbReference>
<dbReference type="EMBL" id="AL356790">
    <property type="status" value="NOT_ANNOTATED_CDS"/>
    <property type="molecule type" value="Genomic_DNA"/>
</dbReference>
<dbReference type="EMBL" id="BC001666">
    <property type="protein sequence ID" value="AAH01666.1"/>
    <property type="molecule type" value="mRNA"/>
</dbReference>
<dbReference type="EMBL" id="AL137320">
    <property type="protein sequence ID" value="CAB70695.1"/>
    <property type="molecule type" value="mRNA"/>
</dbReference>
<dbReference type="CCDS" id="CCDS13550.1">
    <molecule id="O94906-1"/>
</dbReference>
<dbReference type="PIR" id="T46386">
    <property type="entry name" value="T46386"/>
</dbReference>
<dbReference type="RefSeq" id="NP_036601.2">
    <molecule id="O94906-1"/>
    <property type="nucleotide sequence ID" value="NM_012469.3"/>
</dbReference>
<dbReference type="PDB" id="3JCR">
    <property type="method" value="EM"/>
    <property type="resolution" value="7.00 A"/>
    <property type="chains" value="G=1-941"/>
</dbReference>
<dbReference type="PDB" id="5O9Z">
    <property type="method" value="EM"/>
    <property type="resolution" value="4.50 A"/>
    <property type="chains" value="G=1-941"/>
</dbReference>
<dbReference type="PDB" id="6AH0">
    <property type="method" value="EM"/>
    <property type="resolution" value="5.70 A"/>
    <property type="chains" value="N=1-941"/>
</dbReference>
<dbReference type="PDB" id="6AHD">
    <property type="method" value="EM"/>
    <property type="resolution" value="3.80 A"/>
    <property type="chains" value="N=1-941"/>
</dbReference>
<dbReference type="PDB" id="6QW6">
    <property type="method" value="EM"/>
    <property type="resolution" value="2.92 A"/>
    <property type="chains" value="5J=1-941"/>
</dbReference>
<dbReference type="PDB" id="6QX9">
    <property type="method" value="EM"/>
    <property type="resolution" value="3.28 A"/>
    <property type="chains" value="5J=656-937"/>
</dbReference>
<dbReference type="PDB" id="8H6E">
    <property type="method" value="EM"/>
    <property type="resolution" value="3.20 A"/>
    <property type="chains" value="4G=1-941"/>
</dbReference>
<dbReference type="PDB" id="8H6J">
    <property type="method" value="EM"/>
    <property type="resolution" value="3.25 A"/>
    <property type="chains" value="4G=1-941"/>
</dbReference>
<dbReference type="PDB" id="8H6K">
    <property type="method" value="EM"/>
    <property type="resolution" value="2.70 A"/>
    <property type="chains" value="4G=1-941"/>
</dbReference>
<dbReference type="PDB" id="8H6L">
    <property type="method" value="EM"/>
    <property type="resolution" value="2.60 A"/>
    <property type="chains" value="4G=1-941"/>
</dbReference>
<dbReference type="PDB" id="8Q7N">
    <property type="method" value="EM"/>
    <property type="resolution" value="3.10 A"/>
    <property type="chains" value="N=1-941"/>
</dbReference>
<dbReference type="PDB" id="8Q7Q">
    <property type="method" value="EM"/>
    <property type="resolution" value="3.20 A"/>
    <property type="chains" value="F=1-941"/>
</dbReference>
<dbReference type="PDB" id="8Q7V">
    <property type="method" value="EM"/>
    <property type="resolution" value="3.80 A"/>
    <property type="chains" value="F=1-941"/>
</dbReference>
<dbReference type="PDB" id="8Q7W">
    <property type="method" value="EM"/>
    <property type="resolution" value="3.90 A"/>
    <property type="chains" value="F=1-941"/>
</dbReference>
<dbReference type="PDB" id="8Q7X">
    <property type="method" value="EM"/>
    <property type="resolution" value="4.60 A"/>
    <property type="chains" value="F=1-941"/>
</dbReference>
<dbReference type="PDB" id="8Q91">
    <property type="method" value="EM"/>
    <property type="resolution" value="3.10 A"/>
    <property type="chains" value="E=1-941"/>
</dbReference>
<dbReference type="PDB" id="8QO9">
    <property type="method" value="EM"/>
    <property type="resolution" value="5.29 A"/>
    <property type="chains" value="N=1-941"/>
</dbReference>
<dbReference type="PDB" id="8QOZ">
    <property type="method" value="EM"/>
    <property type="resolution" value="3.10 A"/>
    <property type="chains" value="N=1-941"/>
</dbReference>
<dbReference type="PDB" id="8QP8">
    <property type="method" value="EM"/>
    <property type="resolution" value="3.50 A"/>
    <property type="chains" value="N=1-941"/>
</dbReference>
<dbReference type="PDB" id="8QP9">
    <property type="method" value="EM"/>
    <property type="resolution" value="4.10 A"/>
    <property type="chains" value="N=1-941"/>
</dbReference>
<dbReference type="PDB" id="8QPA">
    <property type="method" value="EM"/>
    <property type="resolution" value="3.70 A"/>
    <property type="chains" value="N=1-941"/>
</dbReference>
<dbReference type="PDB" id="8QPB">
    <property type="method" value="EM"/>
    <property type="resolution" value="3.70 A"/>
    <property type="chains" value="N=1-941"/>
</dbReference>
<dbReference type="PDB" id="8QPE">
    <property type="method" value="EM"/>
    <property type="resolution" value="3.10 A"/>
    <property type="chains" value="N=1-941"/>
</dbReference>
<dbReference type="PDB" id="8QPK">
    <property type="method" value="EM"/>
    <property type="resolution" value="4.20 A"/>
    <property type="chains" value="N=1-941"/>
</dbReference>
<dbReference type="PDB" id="8QXD">
    <property type="method" value="EM"/>
    <property type="resolution" value="9.60 A"/>
    <property type="chains" value="N=1-941"/>
</dbReference>
<dbReference type="PDB" id="8QZS">
    <property type="method" value="EM"/>
    <property type="resolution" value="4.10 A"/>
    <property type="chains" value="N=1-941"/>
</dbReference>
<dbReference type="PDB" id="8R08">
    <property type="method" value="EM"/>
    <property type="resolution" value="6.10 A"/>
    <property type="chains" value="N=1-941"/>
</dbReference>
<dbReference type="PDB" id="8R09">
    <property type="method" value="EM"/>
    <property type="resolution" value="4.30 A"/>
    <property type="chains" value="N=1-941"/>
</dbReference>
<dbReference type="PDB" id="8R0A">
    <property type="method" value="EM"/>
    <property type="resolution" value="5.80 A"/>
    <property type="chains" value="N=1-941"/>
</dbReference>
<dbReference type="PDB" id="8R0B">
    <property type="method" value="EM"/>
    <property type="resolution" value="4.40 A"/>
    <property type="chains" value="N=1-941"/>
</dbReference>
<dbReference type="PDB" id="8RC0">
    <property type="method" value="EM"/>
    <property type="resolution" value="3.20 A"/>
    <property type="chains" value="E=1-941"/>
</dbReference>
<dbReference type="PDB" id="8RM5">
    <property type="method" value="EM"/>
    <property type="resolution" value="6.90 A"/>
    <property type="chains" value="N=1-941"/>
</dbReference>
<dbReference type="PDB" id="8Y6O">
    <property type="method" value="EM"/>
    <property type="resolution" value="3.38 A"/>
    <property type="chains" value="G=1-941"/>
</dbReference>
<dbReference type="PDBsum" id="3JCR"/>
<dbReference type="PDBsum" id="5O9Z"/>
<dbReference type="PDBsum" id="6AH0"/>
<dbReference type="PDBsum" id="6AHD"/>
<dbReference type="PDBsum" id="6QW6"/>
<dbReference type="PDBsum" id="6QX9"/>
<dbReference type="PDBsum" id="8H6E"/>
<dbReference type="PDBsum" id="8H6J"/>
<dbReference type="PDBsum" id="8H6K"/>
<dbReference type="PDBsum" id="8H6L"/>
<dbReference type="PDBsum" id="8Q7N"/>
<dbReference type="PDBsum" id="8Q7Q"/>
<dbReference type="PDBsum" id="8Q7V"/>
<dbReference type="PDBsum" id="8Q7W"/>
<dbReference type="PDBsum" id="8Q7X"/>
<dbReference type="PDBsum" id="8Q91"/>
<dbReference type="PDBsum" id="8QO9"/>
<dbReference type="PDBsum" id="8QOZ"/>
<dbReference type="PDBsum" id="8QP8"/>
<dbReference type="PDBsum" id="8QP9"/>
<dbReference type="PDBsum" id="8QPA"/>
<dbReference type="PDBsum" id="8QPB"/>
<dbReference type="PDBsum" id="8QPE"/>
<dbReference type="PDBsum" id="8QPK"/>
<dbReference type="PDBsum" id="8QXD"/>
<dbReference type="PDBsum" id="8QZS"/>
<dbReference type="PDBsum" id="8R08"/>
<dbReference type="PDBsum" id="8R09"/>
<dbReference type="PDBsum" id="8R0A"/>
<dbReference type="PDBsum" id="8R0B"/>
<dbReference type="PDBsum" id="8RC0"/>
<dbReference type="PDBsum" id="8RM5"/>
<dbReference type="PDBsum" id="8Y6O"/>
<dbReference type="EMDB" id="EMD-18225"/>
<dbReference type="EMDB" id="EMD-18229"/>
<dbReference type="EMDB" id="EMD-18234"/>
<dbReference type="EMDB" id="EMD-18235"/>
<dbReference type="EMDB" id="EMD-18237"/>
<dbReference type="EMDB" id="EMD-18267"/>
<dbReference type="EMDB" id="EMD-18529"/>
<dbReference type="EMDB" id="EMD-18542"/>
<dbReference type="EMDB" id="EMD-18544"/>
<dbReference type="EMDB" id="EMD-18545"/>
<dbReference type="EMDB" id="EMD-18546"/>
<dbReference type="EMDB" id="EMD-18547"/>
<dbReference type="EMDB" id="EMD-18548"/>
<dbReference type="EMDB" id="EMD-18555"/>
<dbReference type="EMDB" id="EMD-18718"/>
<dbReference type="EMDB" id="EMD-18781"/>
<dbReference type="EMDB" id="EMD-18786"/>
<dbReference type="EMDB" id="EMD-18787"/>
<dbReference type="EMDB" id="EMD-18788"/>
<dbReference type="EMDB" id="EMD-18789"/>
<dbReference type="EMDB" id="EMD-19041"/>
<dbReference type="EMDB" id="EMD-19349"/>
<dbReference type="EMDB" id="EMD-34500"/>
<dbReference type="EMDB" id="EMD-34505"/>
<dbReference type="EMDB" id="EMD-34507"/>
<dbReference type="EMDB" id="EMD-34508"/>
<dbReference type="EMDB" id="EMD-3766"/>
<dbReference type="EMDB" id="EMD-38993"/>
<dbReference type="EMDB" id="EMD-4658"/>
<dbReference type="EMDB" id="EMD-4665"/>
<dbReference type="EMDB" id="EMD-9621"/>
<dbReference type="EMDB" id="EMD-9624"/>
<dbReference type="SMR" id="O94906"/>
<dbReference type="BioGRID" id="117298">
    <property type="interactions" value="381"/>
</dbReference>
<dbReference type="ComplexPortal" id="CPX-2391">
    <property type="entry name" value="U4/U6.U5 small nuclear ribonucleoprotein complex"/>
</dbReference>
<dbReference type="CORUM" id="O94906"/>
<dbReference type="DIP" id="DIP-29006N"/>
<dbReference type="FunCoup" id="O94906">
    <property type="interactions" value="4151"/>
</dbReference>
<dbReference type="IntAct" id="O94906">
    <property type="interactions" value="137"/>
</dbReference>
<dbReference type="MINT" id="O94906"/>
<dbReference type="STRING" id="9606.ENSP00000266079"/>
<dbReference type="MoonDB" id="O94906">
    <property type="type" value="Predicted"/>
</dbReference>
<dbReference type="GlyCosmos" id="O94906">
    <property type="glycosylation" value="1 site, 1 glycan"/>
</dbReference>
<dbReference type="GlyGen" id="O94906">
    <property type="glycosylation" value="3 sites, 1 O-linked glycan (3 sites)"/>
</dbReference>
<dbReference type="iPTMnet" id="O94906"/>
<dbReference type="MetOSite" id="O94906"/>
<dbReference type="PhosphoSitePlus" id="O94906"/>
<dbReference type="SwissPalm" id="O94906"/>
<dbReference type="BioMuta" id="PRPF6"/>
<dbReference type="jPOST" id="O94906"/>
<dbReference type="MassIVE" id="O94906"/>
<dbReference type="PaxDb" id="9606-ENSP00000266079"/>
<dbReference type="PeptideAtlas" id="O94906"/>
<dbReference type="ProteomicsDB" id="50541">
    <molecule id="O94906-1"/>
</dbReference>
<dbReference type="ProteomicsDB" id="50542">
    <molecule id="O94906-2"/>
</dbReference>
<dbReference type="Pumba" id="O94906"/>
<dbReference type="Antibodypedia" id="15475">
    <property type="antibodies" value="220 antibodies from 30 providers"/>
</dbReference>
<dbReference type="DNASU" id="24148"/>
<dbReference type="Ensembl" id="ENST00000266079.5">
    <molecule id="O94906-1"/>
    <property type="protein sequence ID" value="ENSP00000266079.4"/>
    <property type="gene ID" value="ENSG00000101161.8"/>
</dbReference>
<dbReference type="GeneID" id="24148"/>
<dbReference type="KEGG" id="hsa:24148"/>
<dbReference type="MANE-Select" id="ENST00000266079.5">
    <property type="protein sequence ID" value="ENSP00000266079.4"/>
    <property type="RefSeq nucleotide sequence ID" value="NM_012469.4"/>
    <property type="RefSeq protein sequence ID" value="NP_036601.2"/>
</dbReference>
<dbReference type="UCSC" id="uc002yho.4">
    <molecule id="O94906-1"/>
    <property type="organism name" value="human"/>
</dbReference>
<dbReference type="AGR" id="HGNC:15860"/>
<dbReference type="CTD" id="24148"/>
<dbReference type="DisGeNET" id="24148"/>
<dbReference type="GeneCards" id="PRPF6"/>
<dbReference type="GeneReviews" id="PRPF6"/>
<dbReference type="HGNC" id="HGNC:15860">
    <property type="gene designation" value="PRPF6"/>
</dbReference>
<dbReference type="HPA" id="ENSG00000101161">
    <property type="expression patterns" value="Low tissue specificity"/>
</dbReference>
<dbReference type="MalaCards" id="PRPF6"/>
<dbReference type="MIM" id="613979">
    <property type="type" value="gene"/>
</dbReference>
<dbReference type="MIM" id="613983">
    <property type="type" value="phenotype"/>
</dbReference>
<dbReference type="neXtProt" id="NX_O94906"/>
<dbReference type="OpenTargets" id="ENSG00000101161"/>
<dbReference type="Orphanet" id="791">
    <property type="disease" value="Retinitis pigmentosa"/>
</dbReference>
<dbReference type="PharmGKB" id="PA25682"/>
<dbReference type="VEuPathDB" id="HostDB:ENSG00000101161"/>
<dbReference type="eggNOG" id="KOG0495">
    <property type="taxonomic scope" value="Eukaryota"/>
</dbReference>
<dbReference type="GeneTree" id="ENSGT00550000075016"/>
<dbReference type="HOGENOM" id="CLU_007010_0_0_1"/>
<dbReference type="InParanoid" id="O94906"/>
<dbReference type="OMA" id="DGWAWYY"/>
<dbReference type="OrthoDB" id="440128at2759"/>
<dbReference type="PAN-GO" id="O94906">
    <property type="GO annotations" value="4 GO annotations based on evolutionary models"/>
</dbReference>
<dbReference type="PhylomeDB" id="O94906"/>
<dbReference type="TreeFam" id="TF105743"/>
<dbReference type="PathwayCommons" id="O94906"/>
<dbReference type="Reactome" id="R-HSA-72163">
    <property type="pathway name" value="mRNA Splicing - Major Pathway"/>
</dbReference>
<dbReference type="Reactome" id="R-HSA-72165">
    <property type="pathway name" value="mRNA Splicing - Minor Pathway"/>
</dbReference>
<dbReference type="SignaLink" id="O94906"/>
<dbReference type="SIGNOR" id="O94906"/>
<dbReference type="BioGRID-ORCS" id="24148">
    <property type="hits" value="770 hits in 1112 CRISPR screens"/>
</dbReference>
<dbReference type="CD-CODE" id="6F24707C">
    <property type="entry name" value="Cajal body"/>
</dbReference>
<dbReference type="ChiTaRS" id="PRPF6">
    <property type="organism name" value="human"/>
</dbReference>
<dbReference type="GeneWiki" id="PRPF6"/>
<dbReference type="GenomeRNAi" id="24148"/>
<dbReference type="Pharos" id="O94906">
    <property type="development level" value="Tbio"/>
</dbReference>
<dbReference type="PRO" id="PR:O94906"/>
<dbReference type="Proteomes" id="UP000005640">
    <property type="component" value="Chromosome 20"/>
</dbReference>
<dbReference type="RNAct" id="O94906">
    <property type="molecule type" value="protein"/>
</dbReference>
<dbReference type="Bgee" id="ENSG00000101161">
    <property type="expression patterns" value="Expressed in tendon of biceps brachii and 205 other cell types or tissues"/>
</dbReference>
<dbReference type="GO" id="GO:0071013">
    <property type="term" value="C:catalytic step 2 spliceosome"/>
    <property type="evidence" value="ECO:0000314"/>
    <property type="project" value="UniProtKB"/>
</dbReference>
<dbReference type="GO" id="GO:0005813">
    <property type="term" value="C:centrosome"/>
    <property type="evidence" value="ECO:0000314"/>
    <property type="project" value="HPA"/>
</dbReference>
<dbReference type="GO" id="GO:0036064">
    <property type="term" value="C:ciliary basal body"/>
    <property type="evidence" value="ECO:0000314"/>
    <property type="project" value="HPA"/>
</dbReference>
<dbReference type="GO" id="GO:0005829">
    <property type="term" value="C:cytosol"/>
    <property type="evidence" value="ECO:0000314"/>
    <property type="project" value="HPA"/>
</dbReference>
<dbReference type="GO" id="GO:0043231">
    <property type="term" value="C:intracellular membrane-bounded organelle"/>
    <property type="evidence" value="ECO:0000314"/>
    <property type="project" value="HPA"/>
</dbReference>
<dbReference type="GO" id="GO:0016020">
    <property type="term" value="C:membrane"/>
    <property type="evidence" value="ECO:0007005"/>
    <property type="project" value="UniProtKB"/>
</dbReference>
<dbReference type="GO" id="GO:0016607">
    <property type="term" value="C:nuclear speck"/>
    <property type="evidence" value="ECO:0000314"/>
    <property type="project" value="HPA"/>
</dbReference>
<dbReference type="GO" id="GO:0005654">
    <property type="term" value="C:nucleoplasm"/>
    <property type="evidence" value="ECO:0000314"/>
    <property type="project" value="HPA"/>
</dbReference>
<dbReference type="GO" id="GO:0005634">
    <property type="term" value="C:nucleus"/>
    <property type="evidence" value="ECO:0000314"/>
    <property type="project" value="UniProtKB"/>
</dbReference>
<dbReference type="GO" id="GO:0005681">
    <property type="term" value="C:spliceosomal complex"/>
    <property type="evidence" value="ECO:0000303"/>
    <property type="project" value="UniProtKB"/>
</dbReference>
<dbReference type="GO" id="GO:0071005">
    <property type="term" value="C:U2-type precatalytic spliceosome"/>
    <property type="evidence" value="ECO:0000314"/>
    <property type="project" value="UniProtKB"/>
</dbReference>
<dbReference type="GO" id="GO:0046540">
    <property type="term" value="C:U4/U6 x U5 tri-snRNP complex"/>
    <property type="evidence" value="ECO:0000314"/>
    <property type="project" value="BHF-UCL"/>
</dbReference>
<dbReference type="GO" id="GO:0005682">
    <property type="term" value="C:U5 snRNP"/>
    <property type="evidence" value="ECO:0000314"/>
    <property type="project" value="BHF-UCL"/>
</dbReference>
<dbReference type="GO" id="GO:0042802">
    <property type="term" value="F:identical protein binding"/>
    <property type="evidence" value="ECO:0000353"/>
    <property type="project" value="IntAct"/>
</dbReference>
<dbReference type="GO" id="GO:0030674">
    <property type="term" value="F:protein-macromolecule adaptor activity"/>
    <property type="evidence" value="ECO:0000314"/>
    <property type="project" value="UniProtKB"/>
</dbReference>
<dbReference type="GO" id="GO:0043021">
    <property type="term" value="F:ribonucleoprotein complex binding"/>
    <property type="evidence" value="ECO:0000314"/>
    <property type="project" value="BHF-UCL"/>
</dbReference>
<dbReference type="GO" id="GO:0003723">
    <property type="term" value="F:RNA binding"/>
    <property type="evidence" value="ECO:0000314"/>
    <property type="project" value="MGI"/>
</dbReference>
<dbReference type="GO" id="GO:0000398">
    <property type="term" value="P:mRNA splicing, via spliceosome"/>
    <property type="evidence" value="ECO:0000314"/>
    <property type="project" value="UniProtKB"/>
</dbReference>
<dbReference type="GO" id="GO:0045944">
    <property type="term" value="P:positive regulation of transcription by RNA polymerase II"/>
    <property type="evidence" value="ECO:0000314"/>
    <property type="project" value="MGI"/>
</dbReference>
<dbReference type="GO" id="GO:0006403">
    <property type="term" value="P:RNA localization"/>
    <property type="evidence" value="ECO:0000315"/>
    <property type="project" value="MGI"/>
</dbReference>
<dbReference type="GO" id="GO:0008380">
    <property type="term" value="P:RNA splicing"/>
    <property type="evidence" value="ECO:0000303"/>
    <property type="project" value="UniProtKB"/>
</dbReference>
<dbReference type="GO" id="GO:0000375">
    <property type="term" value="P:RNA splicing, via transesterification reactions"/>
    <property type="evidence" value="ECO:0000303"/>
    <property type="project" value="UniProtKB"/>
</dbReference>
<dbReference type="GO" id="GO:0000245">
    <property type="term" value="P:spliceosomal complex assembly"/>
    <property type="evidence" value="ECO:0000303"/>
    <property type="project" value="UniProtKB"/>
</dbReference>
<dbReference type="GO" id="GO:0000244">
    <property type="term" value="P:spliceosomal tri-snRNP complex assembly"/>
    <property type="evidence" value="ECO:0000314"/>
    <property type="project" value="UniProtKB"/>
</dbReference>
<dbReference type="FunFam" id="1.25.40.10:FF:000649">
    <property type="entry name" value="mRNA splicing factor (Prp1/Zer1), putative"/>
    <property type="match status" value="1"/>
</dbReference>
<dbReference type="FunFam" id="1.25.40.10:FF:000054">
    <property type="entry name" value="Pre-mRNA processing factor 6"/>
    <property type="match status" value="1"/>
</dbReference>
<dbReference type="FunFam" id="1.25.40.10:FF:000058">
    <property type="entry name" value="Pre-mRNA processing factor 6"/>
    <property type="match status" value="1"/>
</dbReference>
<dbReference type="FunFam" id="1.25.40.10:FF:003529">
    <property type="entry name" value="Uncharacterized protein"/>
    <property type="match status" value="1"/>
</dbReference>
<dbReference type="Gene3D" id="1.25.40.10">
    <property type="entry name" value="Tetratricopeptide repeat domain"/>
    <property type="match status" value="4"/>
</dbReference>
<dbReference type="InterPro" id="IPR003107">
    <property type="entry name" value="HAT"/>
</dbReference>
<dbReference type="InterPro" id="IPR010491">
    <property type="entry name" value="PRP1_N"/>
</dbReference>
<dbReference type="InterPro" id="IPR045075">
    <property type="entry name" value="Syf1-like"/>
</dbReference>
<dbReference type="InterPro" id="IPR011990">
    <property type="entry name" value="TPR-like_helical_dom_sf"/>
</dbReference>
<dbReference type="InterPro" id="IPR019734">
    <property type="entry name" value="TPR_rpt"/>
</dbReference>
<dbReference type="PANTHER" id="PTHR11246">
    <property type="entry name" value="PRE-MRNA SPLICING FACTOR"/>
    <property type="match status" value="1"/>
</dbReference>
<dbReference type="PANTHER" id="PTHR11246:SF1">
    <property type="entry name" value="PRE-MRNA-PROCESSING FACTOR 6"/>
    <property type="match status" value="1"/>
</dbReference>
<dbReference type="Pfam" id="PF06424">
    <property type="entry name" value="PRP1_N"/>
    <property type="match status" value="1"/>
</dbReference>
<dbReference type="Pfam" id="PF13432">
    <property type="entry name" value="TPR_16"/>
    <property type="match status" value="1"/>
</dbReference>
<dbReference type="Pfam" id="PF14559">
    <property type="entry name" value="TPR_19"/>
    <property type="match status" value="1"/>
</dbReference>
<dbReference type="SMART" id="SM00386">
    <property type="entry name" value="HAT"/>
    <property type="match status" value="13"/>
</dbReference>
<dbReference type="SMART" id="SM00028">
    <property type="entry name" value="TPR"/>
    <property type="match status" value="3"/>
</dbReference>
<dbReference type="SUPFAM" id="SSF48452">
    <property type="entry name" value="TPR-like"/>
    <property type="match status" value="4"/>
</dbReference>
<protein>
    <recommendedName>
        <fullName>Pre-mRNA-processing factor 6</fullName>
    </recommendedName>
    <alternativeName>
        <fullName>Androgen receptor N-terminal domain-transactivating protein 1</fullName>
        <shortName>ANT-1</shortName>
    </alternativeName>
    <alternativeName>
        <fullName>PRP6 homolog</fullName>
    </alternativeName>
    <alternativeName>
        <fullName>U5 snRNP-associated 102 kDa protein</fullName>
        <shortName>U5-102 kDa protein</shortName>
    </alternativeName>
</protein>
<name>PRP6_HUMAN</name>